<keyword id="KW-0067">ATP-binding</keyword>
<keyword id="KW-0418">Kinase</keyword>
<keyword id="KW-0545">Nucleotide biosynthesis</keyword>
<keyword id="KW-0547">Nucleotide-binding</keyword>
<keyword id="KW-1185">Reference proteome</keyword>
<keyword id="KW-0808">Transferase</keyword>
<proteinExistence type="inferred from homology"/>
<dbReference type="EC" id="2.7.4.9" evidence="1"/>
<dbReference type="EMBL" id="CU468135">
    <property type="protein sequence ID" value="CAO97063.1"/>
    <property type="molecule type" value="Genomic_DNA"/>
</dbReference>
<dbReference type="RefSeq" id="WP_012441741.1">
    <property type="nucleotide sequence ID" value="NC_010694.1"/>
</dbReference>
<dbReference type="SMR" id="B2VDK3"/>
<dbReference type="STRING" id="465817.ETA_20170"/>
<dbReference type="KEGG" id="eta:ETA_20170"/>
<dbReference type="eggNOG" id="COG0125">
    <property type="taxonomic scope" value="Bacteria"/>
</dbReference>
<dbReference type="HOGENOM" id="CLU_049131_0_1_6"/>
<dbReference type="OrthoDB" id="9774907at2"/>
<dbReference type="Proteomes" id="UP000001726">
    <property type="component" value="Chromosome"/>
</dbReference>
<dbReference type="GO" id="GO:0005829">
    <property type="term" value="C:cytosol"/>
    <property type="evidence" value="ECO:0007669"/>
    <property type="project" value="TreeGrafter"/>
</dbReference>
<dbReference type="GO" id="GO:0005524">
    <property type="term" value="F:ATP binding"/>
    <property type="evidence" value="ECO:0007669"/>
    <property type="project" value="UniProtKB-UniRule"/>
</dbReference>
<dbReference type="GO" id="GO:0004798">
    <property type="term" value="F:dTMP kinase activity"/>
    <property type="evidence" value="ECO:0007669"/>
    <property type="project" value="UniProtKB-UniRule"/>
</dbReference>
<dbReference type="GO" id="GO:0006233">
    <property type="term" value="P:dTDP biosynthetic process"/>
    <property type="evidence" value="ECO:0007669"/>
    <property type="project" value="InterPro"/>
</dbReference>
<dbReference type="GO" id="GO:0006235">
    <property type="term" value="P:dTTP biosynthetic process"/>
    <property type="evidence" value="ECO:0007669"/>
    <property type="project" value="UniProtKB-UniRule"/>
</dbReference>
<dbReference type="GO" id="GO:0006227">
    <property type="term" value="P:dUDP biosynthetic process"/>
    <property type="evidence" value="ECO:0007669"/>
    <property type="project" value="TreeGrafter"/>
</dbReference>
<dbReference type="CDD" id="cd01672">
    <property type="entry name" value="TMPK"/>
    <property type="match status" value="1"/>
</dbReference>
<dbReference type="FunFam" id="3.40.50.300:FF:000321">
    <property type="entry name" value="Thymidylate kinase"/>
    <property type="match status" value="1"/>
</dbReference>
<dbReference type="Gene3D" id="3.40.50.300">
    <property type="entry name" value="P-loop containing nucleotide triphosphate hydrolases"/>
    <property type="match status" value="1"/>
</dbReference>
<dbReference type="HAMAP" id="MF_00165">
    <property type="entry name" value="Thymidylate_kinase"/>
    <property type="match status" value="1"/>
</dbReference>
<dbReference type="InterPro" id="IPR027417">
    <property type="entry name" value="P-loop_NTPase"/>
</dbReference>
<dbReference type="InterPro" id="IPR039430">
    <property type="entry name" value="Thymidylate_kin-like_dom"/>
</dbReference>
<dbReference type="InterPro" id="IPR018095">
    <property type="entry name" value="Thymidylate_kin_CS"/>
</dbReference>
<dbReference type="InterPro" id="IPR018094">
    <property type="entry name" value="Thymidylate_kinase"/>
</dbReference>
<dbReference type="NCBIfam" id="TIGR00041">
    <property type="entry name" value="DTMP_kinase"/>
    <property type="match status" value="1"/>
</dbReference>
<dbReference type="PANTHER" id="PTHR10344">
    <property type="entry name" value="THYMIDYLATE KINASE"/>
    <property type="match status" value="1"/>
</dbReference>
<dbReference type="PANTHER" id="PTHR10344:SF4">
    <property type="entry name" value="UMP-CMP KINASE 2, MITOCHONDRIAL"/>
    <property type="match status" value="1"/>
</dbReference>
<dbReference type="Pfam" id="PF02223">
    <property type="entry name" value="Thymidylate_kin"/>
    <property type="match status" value="1"/>
</dbReference>
<dbReference type="SUPFAM" id="SSF52540">
    <property type="entry name" value="P-loop containing nucleoside triphosphate hydrolases"/>
    <property type="match status" value="1"/>
</dbReference>
<dbReference type="PROSITE" id="PS01331">
    <property type="entry name" value="THYMIDYLATE_KINASE"/>
    <property type="match status" value="1"/>
</dbReference>
<gene>
    <name evidence="1" type="primary">tmk</name>
    <name type="ordered locus">ETA_20170</name>
</gene>
<organism>
    <name type="scientific">Erwinia tasmaniensis (strain DSM 17950 / CFBP 7177 / CIP 109463 / NCPPB 4357 / Et1/99)</name>
    <dbReference type="NCBI Taxonomy" id="465817"/>
    <lineage>
        <taxon>Bacteria</taxon>
        <taxon>Pseudomonadati</taxon>
        <taxon>Pseudomonadota</taxon>
        <taxon>Gammaproteobacteria</taxon>
        <taxon>Enterobacterales</taxon>
        <taxon>Erwiniaceae</taxon>
        <taxon>Erwinia</taxon>
    </lineage>
</organism>
<evidence type="ECO:0000255" key="1">
    <source>
        <dbReference type="HAMAP-Rule" id="MF_00165"/>
    </source>
</evidence>
<reference key="1">
    <citation type="journal article" date="2008" name="Environ. Microbiol.">
        <title>The genome of Erwinia tasmaniensis strain Et1/99, a non-pathogenic bacterium in the genus Erwinia.</title>
        <authorList>
            <person name="Kube M."/>
            <person name="Migdoll A.M."/>
            <person name="Mueller I."/>
            <person name="Kuhl H."/>
            <person name="Beck A."/>
            <person name="Reinhardt R."/>
            <person name="Geider K."/>
        </authorList>
    </citation>
    <scope>NUCLEOTIDE SEQUENCE [LARGE SCALE GENOMIC DNA]</scope>
    <source>
        <strain>DSM 17950 / CFBP 7177 / CIP 109463 / NCPPB 4357 / Et1/99</strain>
    </source>
</reference>
<feature type="chain" id="PRO_1000097393" description="Thymidylate kinase">
    <location>
        <begin position="1"/>
        <end position="210"/>
    </location>
</feature>
<feature type="binding site" evidence="1">
    <location>
        <begin position="10"/>
        <end position="17"/>
    </location>
    <ligand>
        <name>ATP</name>
        <dbReference type="ChEBI" id="CHEBI:30616"/>
    </ligand>
</feature>
<sequence length="210" mass="23230">MNSKFIVIEGLEGAGKTTAREAVVSELQRHGINDIIFTREPGGTPLAEKLRELIKQGVEGERVTDSAELLMLYAARVQLVENVIKPALARGAWVVGDRHDLSSQAYQGGGRGMDAGLMNSLKQAVLGDFAPDLTLYLDVTPQIGLQRARARGELDRIEQESLNFFTRTRERYLALASADSRIKTVDATRPLEQVTAALQQTLTQWLQEQR</sequence>
<name>KTHY_ERWT9</name>
<comment type="function">
    <text evidence="1">Phosphorylation of dTMP to form dTDP in both de novo and salvage pathways of dTTP synthesis.</text>
</comment>
<comment type="catalytic activity">
    <reaction evidence="1">
        <text>dTMP + ATP = dTDP + ADP</text>
        <dbReference type="Rhea" id="RHEA:13517"/>
        <dbReference type="ChEBI" id="CHEBI:30616"/>
        <dbReference type="ChEBI" id="CHEBI:58369"/>
        <dbReference type="ChEBI" id="CHEBI:63528"/>
        <dbReference type="ChEBI" id="CHEBI:456216"/>
        <dbReference type="EC" id="2.7.4.9"/>
    </reaction>
</comment>
<comment type="similarity">
    <text evidence="1">Belongs to the thymidylate kinase family.</text>
</comment>
<accession>B2VDK3</accession>
<protein>
    <recommendedName>
        <fullName evidence="1">Thymidylate kinase</fullName>
        <ecNumber evidence="1">2.7.4.9</ecNumber>
    </recommendedName>
    <alternativeName>
        <fullName evidence="1">dTMP kinase</fullName>
    </alternativeName>
</protein>